<name>VG38_BPMD2</name>
<organismHost>
    <name type="scientific">Mycobacterium</name>
    <dbReference type="NCBI Taxonomy" id="1763"/>
</organismHost>
<dbReference type="EMBL" id="AF022214">
    <property type="protein sequence ID" value="AAC18479.1"/>
    <property type="molecule type" value="Genomic_DNA"/>
</dbReference>
<dbReference type="PIR" id="D72804">
    <property type="entry name" value="D72804"/>
</dbReference>
<dbReference type="RefSeq" id="NP_046854.1">
    <property type="nucleotide sequence ID" value="NC_001900.1"/>
</dbReference>
<dbReference type="GeneID" id="1261566"/>
<dbReference type="KEGG" id="vg:1261566"/>
<dbReference type="OrthoDB" id="28029at10239"/>
<dbReference type="Proteomes" id="UP000002131">
    <property type="component" value="Segment"/>
</dbReference>
<protein>
    <recommendedName>
        <fullName>Gene 38 protein</fullName>
    </recommendedName>
    <alternativeName>
        <fullName>Gp38</fullName>
    </alternativeName>
</protein>
<sequence>MKTIAVLLLVVAFALGLTACDGGGSAPGYTGPNGVIFVPAGGGVNVPIFF</sequence>
<gene>
    <name type="primary">38</name>
</gene>
<accession>O64229</accession>
<organism>
    <name type="scientific">Mycobacterium phage D29</name>
    <name type="common">Mycobacteriophage D29</name>
    <dbReference type="NCBI Taxonomy" id="28369"/>
    <lineage>
        <taxon>Viruses</taxon>
        <taxon>Duplodnaviria</taxon>
        <taxon>Heunggongvirae</taxon>
        <taxon>Uroviricota</taxon>
        <taxon>Caudoviricetes</taxon>
        <taxon>Fromanvirus</taxon>
    </lineage>
</organism>
<feature type="chain" id="PRO_0000164760" description="Gene 38 protein">
    <location>
        <begin position="1"/>
        <end position="50"/>
    </location>
</feature>
<keyword id="KW-1185">Reference proteome</keyword>
<proteinExistence type="predicted"/>
<reference key="1">
    <citation type="journal article" date="1998" name="J. Mol. Biol.">
        <title>Genome structure of mycobacteriophage D29: implications for phage evolution.</title>
        <authorList>
            <person name="Ford M.E."/>
            <person name="Sarkis G.J."/>
            <person name="Belanger A.E."/>
            <person name="Hendrix R.W."/>
            <person name="Hatfull G.F."/>
        </authorList>
    </citation>
    <scope>NUCLEOTIDE SEQUENCE [LARGE SCALE GENOMIC DNA]</scope>
</reference>